<protein>
    <recommendedName>
        <fullName evidence="1">Probable protein kinase UbiB</fullName>
        <ecNumber evidence="1">2.7.-.-</ecNumber>
    </recommendedName>
    <alternativeName>
        <fullName evidence="1">Ubiquinone biosynthesis protein UbiB</fullName>
    </alternativeName>
</protein>
<proteinExistence type="inferred from homology"/>
<reference key="1">
    <citation type="journal article" date="2009" name="PLoS Genet.">
        <title>Organised genome dynamics in the Escherichia coli species results in highly diverse adaptive paths.</title>
        <authorList>
            <person name="Touchon M."/>
            <person name="Hoede C."/>
            <person name="Tenaillon O."/>
            <person name="Barbe V."/>
            <person name="Baeriswyl S."/>
            <person name="Bidet P."/>
            <person name="Bingen E."/>
            <person name="Bonacorsi S."/>
            <person name="Bouchier C."/>
            <person name="Bouvet O."/>
            <person name="Calteau A."/>
            <person name="Chiapello H."/>
            <person name="Clermont O."/>
            <person name="Cruveiller S."/>
            <person name="Danchin A."/>
            <person name="Diard M."/>
            <person name="Dossat C."/>
            <person name="Karoui M.E."/>
            <person name="Frapy E."/>
            <person name="Garry L."/>
            <person name="Ghigo J.M."/>
            <person name="Gilles A.M."/>
            <person name="Johnson J."/>
            <person name="Le Bouguenec C."/>
            <person name="Lescat M."/>
            <person name="Mangenot S."/>
            <person name="Martinez-Jehanne V."/>
            <person name="Matic I."/>
            <person name="Nassif X."/>
            <person name="Oztas S."/>
            <person name="Petit M.A."/>
            <person name="Pichon C."/>
            <person name="Rouy Z."/>
            <person name="Ruf C.S."/>
            <person name="Schneider D."/>
            <person name="Tourret J."/>
            <person name="Vacherie B."/>
            <person name="Vallenet D."/>
            <person name="Medigue C."/>
            <person name="Rocha E.P.C."/>
            <person name="Denamur E."/>
        </authorList>
    </citation>
    <scope>NUCLEOTIDE SEQUENCE [LARGE SCALE GENOMIC DNA]</scope>
    <source>
        <strain>55989 / EAEC</strain>
    </source>
</reference>
<sequence length="546" mass="63203">MTPGEVRRLYFIIRTFLSYGLDELIPKMRITLPLRLWRYSLFWMPNRHKDKLLGERLRLALQELGPVWIKFGQMLSTRRDLFPPHIADQLALLQDKVAPFDGKLAKQQIEAAMGGLPVEAWFDDFEIKPLASASIAQVHTARLKSNGKEVVIKVIRPDILPVIKADLKLIYRLARWVPRLLPDGRRLRPTEVVREYEKTLIDELNLLRESANAIQLRRNFEDSPMLYIPEVYPDYCSEGMMVMERIYGIPVSDVAALEKNGTNMKLLAERGVQVFFTQVFRDSFFHADMHPGNIFVSYEHPENPKYIGIDCGIVGSLNKEDKRYLAENFIAFFNRDYRKVAELHVDSGWVPPDTNVEEFEFAIRTVCEPIFEKPLAEISFGHVLLNLFNTARRFNMEVQPQLVLLQKTLLYVEGVGRQLYPQLDLWKTAKPFLESWIKDQVGIPALVRAFKEKAPFWVEKMPELPELVYDSLRQGKYLQHSVDKIARELQSNHVRQGQSRYFLGIGATLVLSGTFLLVSRPEWGLMPGWLMAGGLIAWFVGWRKTR</sequence>
<name>UBIB_ECO55</name>
<keyword id="KW-0067">ATP-binding</keyword>
<keyword id="KW-0997">Cell inner membrane</keyword>
<keyword id="KW-1003">Cell membrane</keyword>
<keyword id="KW-0418">Kinase</keyword>
<keyword id="KW-0472">Membrane</keyword>
<keyword id="KW-0547">Nucleotide-binding</keyword>
<keyword id="KW-1185">Reference proteome</keyword>
<keyword id="KW-0808">Transferase</keyword>
<keyword id="KW-0812">Transmembrane</keyword>
<keyword id="KW-1133">Transmembrane helix</keyword>
<keyword id="KW-0831">Ubiquinone biosynthesis</keyword>
<feature type="chain" id="PRO_1000134816" description="Probable protein kinase UbiB">
    <location>
        <begin position="1"/>
        <end position="546"/>
    </location>
</feature>
<feature type="transmembrane region" description="Helical" evidence="1">
    <location>
        <begin position="501"/>
        <end position="521"/>
    </location>
</feature>
<feature type="transmembrane region" description="Helical" evidence="1">
    <location>
        <begin position="522"/>
        <end position="542"/>
    </location>
</feature>
<feature type="domain" description="Protein kinase" evidence="1">
    <location>
        <begin position="124"/>
        <end position="502"/>
    </location>
</feature>
<feature type="active site" description="Proton acceptor" evidence="1">
    <location>
        <position position="288"/>
    </location>
</feature>
<feature type="binding site" evidence="1">
    <location>
        <begin position="130"/>
        <end position="138"/>
    </location>
    <ligand>
        <name>ATP</name>
        <dbReference type="ChEBI" id="CHEBI:30616"/>
    </ligand>
</feature>
<feature type="binding site" evidence="1">
    <location>
        <position position="153"/>
    </location>
    <ligand>
        <name>ATP</name>
        <dbReference type="ChEBI" id="CHEBI:30616"/>
    </ligand>
</feature>
<evidence type="ECO:0000255" key="1">
    <source>
        <dbReference type="HAMAP-Rule" id="MF_00414"/>
    </source>
</evidence>
<organism>
    <name type="scientific">Escherichia coli (strain 55989 / EAEC)</name>
    <dbReference type="NCBI Taxonomy" id="585055"/>
    <lineage>
        <taxon>Bacteria</taxon>
        <taxon>Pseudomonadati</taxon>
        <taxon>Pseudomonadota</taxon>
        <taxon>Gammaproteobacteria</taxon>
        <taxon>Enterobacterales</taxon>
        <taxon>Enterobacteriaceae</taxon>
        <taxon>Escherichia</taxon>
    </lineage>
</organism>
<dbReference type="EC" id="2.7.-.-" evidence="1"/>
<dbReference type="EMBL" id="CU928145">
    <property type="protein sequence ID" value="CAV00984.1"/>
    <property type="molecule type" value="Genomic_DNA"/>
</dbReference>
<dbReference type="RefSeq" id="WP_000187530.1">
    <property type="nucleotide sequence ID" value="NC_011748.1"/>
</dbReference>
<dbReference type="SMR" id="B7L998"/>
<dbReference type="GeneID" id="75204829"/>
<dbReference type="KEGG" id="eck:EC55989_4312"/>
<dbReference type="HOGENOM" id="CLU_006533_0_0_6"/>
<dbReference type="UniPathway" id="UPA00232"/>
<dbReference type="Proteomes" id="UP000000746">
    <property type="component" value="Chromosome"/>
</dbReference>
<dbReference type="GO" id="GO:0005886">
    <property type="term" value="C:plasma membrane"/>
    <property type="evidence" value="ECO:0007669"/>
    <property type="project" value="UniProtKB-SubCell"/>
</dbReference>
<dbReference type="GO" id="GO:0005524">
    <property type="term" value="F:ATP binding"/>
    <property type="evidence" value="ECO:0007669"/>
    <property type="project" value="UniProtKB-KW"/>
</dbReference>
<dbReference type="GO" id="GO:0004672">
    <property type="term" value="F:protein kinase activity"/>
    <property type="evidence" value="ECO:0007669"/>
    <property type="project" value="UniProtKB-UniRule"/>
</dbReference>
<dbReference type="GO" id="GO:0010795">
    <property type="term" value="P:regulation of ubiquinone biosynthetic process"/>
    <property type="evidence" value="ECO:0007669"/>
    <property type="project" value="UniProtKB-UniRule"/>
</dbReference>
<dbReference type="GO" id="GO:0006744">
    <property type="term" value="P:ubiquinone biosynthetic process"/>
    <property type="evidence" value="ECO:0007669"/>
    <property type="project" value="UniProtKB-UniPathway"/>
</dbReference>
<dbReference type="CDD" id="cd13972">
    <property type="entry name" value="UbiB"/>
    <property type="match status" value="1"/>
</dbReference>
<dbReference type="HAMAP" id="MF_00414">
    <property type="entry name" value="UbiB"/>
    <property type="match status" value="1"/>
</dbReference>
<dbReference type="InterPro" id="IPR004147">
    <property type="entry name" value="ABC1_dom"/>
</dbReference>
<dbReference type="InterPro" id="IPR011009">
    <property type="entry name" value="Kinase-like_dom_sf"/>
</dbReference>
<dbReference type="InterPro" id="IPR010232">
    <property type="entry name" value="UbiB"/>
</dbReference>
<dbReference type="InterPro" id="IPR045308">
    <property type="entry name" value="UbiB_bact"/>
</dbReference>
<dbReference type="InterPro" id="IPR050154">
    <property type="entry name" value="UbiB_kinase"/>
</dbReference>
<dbReference type="NCBIfam" id="NF003404">
    <property type="entry name" value="PRK04750.1"/>
    <property type="match status" value="1"/>
</dbReference>
<dbReference type="NCBIfam" id="TIGR01982">
    <property type="entry name" value="UbiB"/>
    <property type="match status" value="1"/>
</dbReference>
<dbReference type="PANTHER" id="PTHR10566">
    <property type="entry name" value="CHAPERONE-ACTIVITY OF BC1 COMPLEX CABC1 -RELATED"/>
    <property type="match status" value="1"/>
</dbReference>
<dbReference type="PANTHER" id="PTHR10566:SF113">
    <property type="entry name" value="PROTEIN ACTIVITY OF BC1 COMPLEX KINASE 7, CHLOROPLASTIC"/>
    <property type="match status" value="1"/>
</dbReference>
<dbReference type="Pfam" id="PF03109">
    <property type="entry name" value="ABC1"/>
    <property type="match status" value="1"/>
</dbReference>
<dbReference type="SUPFAM" id="SSF56112">
    <property type="entry name" value="Protein kinase-like (PK-like)"/>
    <property type="match status" value="1"/>
</dbReference>
<gene>
    <name evidence="1" type="primary">ubiB</name>
    <name type="ordered locus">EC55989_4312</name>
</gene>
<comment type="function">
    <text evidence="1">Is probably a protein kinase regulator of UbiI activity which is involved in aerobic coenzyme Q (ubiquinone) biosynthesis.</text>
</comment>
<comment type="pathway">
    <text>Cofactor biosynthesis; ubiquinone biosynthesis [regulation].</text>
</comment>
<comment type="subcellular location">
    <subcellularLocation>
        <location evidence="1">Cell inner membrane</location>
        <topology evidence="1">Multi-pass membrane protein</topology>
    </subcellularLocation>
</comment>
<comment type="similarity">
    <text evidence="1">Belongs to the ABC1 family. UbiB subfamily.</text>
</comment>
<accession>B7L998</accession>